<proteinExistence type="inferred from homology"/>
<organism>
    <name type="scientific">Prochlorococcus marinus (strain MIT 9313)</name>
    <dbReference type="NCBI Taxonomy" id="74547"/>
    <lineage>
        <taxon>Bacteria</taxon>
        <taxon>Bacillati</taxon>
        <taxon>Cyanobacteriota</taxon>
        <taxon>Cyanophyceae</taxon>
        <taxon>Synechococcales</taxon>
        <taxon>Prochlorococcaceae</taxon>
        <taxon>Prochlorococcus</taxon>
    </lineage>
</organism>
<name>PSBN_PROMM</name>
<keyword id="KW-0472">Membrane</keyword>
<keyword id="KW-1185">Reference proteome</keyword>
<keyword id="KW-0793">Thylakoid</keyword>
<keyword id="KW-0812">Transmembrane</keyword>
<keyword id="KW-1133">Transmembrane helix</keyword>
<evidence type="ECO:0000255" key="1">
    <source>
        <dbReference type="HAMAP-Rule" id="MF_00293"/>
    </source>
</evidence>
<protein>
    <recommendedName>
        <fullName evidence="1">Protein PsbN</fullName>
    </recommendedName>
</protein>
<comment type="function">
    <text evidence="1">May play a role in photosystem I and II biogenesis.</text>
</comment>
<comment type="subcellular location">
    <subcellularLocation>
        <location evidence="1">Cellular thylakoid membrane</location>
        <topology evidence="1">Single-pass membrane protein</topology>
    </subcellularLocation>
</comment>
<comment type="similarity">
    <text evidence="1">Belongs to the PsbN family.</text>
</comment>
<comment type="caution">
    <text evidence="1">Originally thought to be a component of PSII; based on experiments in Synechocystis, N.tabacum and barley, and its absence from PSII in T.elongatus and T.vulcanus, this is probably not true.</text>
</comment>
<gene>
    <name evidence="1" type="primary">psbN</name>
    <name type="ordered locus">PMT_1838</name>
</gene>
<reference key="1">
    <citation type="journal article" date="2003" name="Nature">
        <title>Genome divergence in two Prochlorococcus ecotypes reflects oceanic niche differentiation.</title>
        <authorList>
            <person name="Rocap G."/>
            <person name="Larimer F.W."/>
            <person name="Lamerdin J.E."/>
            <person name="Malfatti S."/>
            <person name="Chain P."/>
            <person name="Ahlgren N.A."/>
            <person name="Arellano A."/>
            <person name="Coleman M."/>
            <person name="Hauser L."/>
            <person name="Hess W.R."/>
            <person name="Johnson Z.I."/>
            <person name="Land M.L."/>
            <person name="Lindell D."/>
            <person name="Post A.F."/>
            <person name="Regala W."/>
            <person name="Shah M."/>
            <person name="Shaw S.L."/>
            <person name="Steglich C."/>
            <person name="Sullivan M.B."/>
            <person name="Ting C.S."/>
            <person name="Tolonen A."/>
            <person name="Webb E.A."/>
            <person name="Zinser E.R."/>
            <person name="Chisholm S.W."/>
        </authorList>
    </citation>
    <scope>NUCLEOTIDE SEQUENCE [LARGE SCALE GENOMIC DNA]</scope>
    <source>
        <strain>MIT 9313</strain>
    </source>
</reference>
<feature type="chain" id="PRO_0000232786" description="Protein PsbN">
    <location>
        <begin position="1"/>
        <end position="48"/>
    </location>
</feature>
<feature type="transmembrane region" description="Helical" evidence="1">
    <location>
        <begin position="12"/>
        <end position="34"/>
    </location>
</feature>
<dbReference type="EMBL" id="BX548175">
    <property type="protein sequence ID" value="CAE22013.1"/>
    <property type="molecule type" value="Genomic_DNA"/>
</dbReference>
<dbReference type="SMR" id="Q7V4V1"/>
<dbReference type="KEGG" id="pmt:PMT_1838"/>
<dbReference type="eggNOG" id="ENOG5030PNS">
    <property type="taxonomic scope" value="Bacteria"/>
</dbReference>
<dbReference type="HOGENOM" id="CLU_205504_1_0_3"/>
<dbReference type="Proteomes" id="UP000001423">
    <property type="component" value="Chromosome"/>
</dbReference>
<dbReference type="GO" id="GO:0031676">
    <property type="term" value="C:plasma membrane-derived thylakoid membrane"/>
    <property type="evidence" value="ECO:0007669"/>
    <property type="project" value="UniProtKB-SubCell"/>
</dbReference>
<dbReference type="GO" id="GO:0015979">
    <property type="term" value="P:photosynthesis"/>
    <property type="evidence" value="ECO:0007669"/>
    <property type="project" value="InterPro"/>
</dbReference>
<dbReference type="HAMAP" id="MF_00293">
    <property type="entry name" value="PSII_PsbN"/>
    <property type="match status" value="1"/>
</dbReference>
<dbReference type="InterPro" id="IPR003398">
    <property type="entry name" value="PSII_PsbN"/>
</dbReference>
<dbReference type="NCBIfam" id="NF009650">
    <property type="entry name" value="PRK13183.1"/>
    <property type="match status" value="1"/>
</dbReference>
<dbReference type="PANTHER" id="PTHR35326">
    <property type="entry name" value="PROTEIN PSBN"/>
    <property type="match status" value="1"/>
</dbReference>
<dbReference type="PANTHER" id="PTHR35326:SF3">
    <property type="entry name" value="PROTEIN PSBN"/>
    <property type="match status" value="1"/>
</dbReference>
<dbReference type="Pfam" id="PF02468">
    <property type="entry name" value="PsbN"/>
    <property type="match status" value="1"/>
</dbReference>
<accession>Q7V4V1</accession>
<sequence length="48" mass="5350">MMENSSSETYSLLIAMVTITFGLTGYGLYTAFGPPSKELEDPFEEHED</sequence>